<accession>Q6RZN2</accession>
<feature type="chain" id="PRO_0000099564" description="Telomere-binding protein OPG077">
    <location>
        <begin position="1"/>
        <end position="312"/>
    </location>
</feature>
<organism>
    <name type="scientific">Rabbitpox virus (strain Utrecht)</name>
    <name type="common">RPV</name>
    <dbReference type="NCBI Taxonomy" id="45417"/>
    <lineage>
        <taxon>Viruses</taxon>
        <taxon>Varidnaviria</taxon>
        <taxon>Bamfordvirae</taxon>
        <taxon>Nucleocytoviricota</taxon>
        <taxon>Pokkesviricetes</taxon>
        <taxon>Chitovirales</taxon>
        <taxon>Poxviridae</taxon>
        <taxon>Chordopoxvirinae</taxon>
        <taxon>Orthopoxvirus</taxon>
        <taxon>Vaccinia virus</taxon>
    </lineage>
</organism>
<gene>
    <name type="primary">OPG077</name>
    <name type="ordered locus">RPXV059</name>
</gene>
<organismHost>
    <name type="scientific">Oryctolagus cuniculus</name>
    <name type="common">Rabbit</name>
    <dbReference type="NCBI Taxonomy" id="9986"/>
</organismHost>
<proteinExistence type="evidence at transcript level"/>
<reference key="1">
    <citation type="journal article" date="2005" name="J. Gen. Virol.">
        <title>Complete coding sequences of the rabbitpox virus genome.</title>
        <authorList>
            <person name="Li G."/>
            <person name="Chen N."/>
            <person name="Roper R.L."/>
            <person name="Feng Z."/>
            <person name="Hunter A.L."/>
            <person name="Danila M."/>
            <person name="Lefkowitz E.J."/>
            <person name="Buller R.M.L."/>
            <person name="Upton C."/>
        </authorList>
    </citation>
    <scope>NUCLEOTIDE SEQUENCE [LARGE SCALE GENOMIC DNA]</scope>
</reference>
<sequence>MAEFEDQLVFNSISARALKAYFTAKINEMVDELVTRKCPQKKKSQAKKPEVRIPVDLVKSSFVKKFGLCNYGGILISLINSLVENNFFTKDGKLDDTGKKELVLTDVEKRILNTIDKSSPLYIDISDVKVLAARLKRSATQFNFNGHTYHLENDKIEDLINQLVKDESIQLDEKSSIKDSMYVIPDELIDVLKTRLFRSPQVKDNIISRTRLYDYFTRVTKRDESSIYVILKDPRIASILSLETVKMGAFMYTKHSMLTNAISSRVDRYSKKFQESFYEDIAEFVKENERVNVSRVVECLTVPNITISSNAE</sequence>
<dbReference type="EMBL" id="AY484669">
    <property type="protein sequence ID" value="AAS49772.1"/>
    <property type="molecule type" value="Genomic_DNA"/>
</dbReference>
<dbReference type="SMR" id="Q6RZN2"/>
<dbReference type="Proteomes" id="UP000166173">
    <property type="component" value="Segment"/>
</dbReference>
<dbReference type="GO" id="GO:0044423">
    <property type="term" value="C:virion component"/>
    <property type="evidence" value="ECO:0007669"/>
    <property type="project" value="UniProtKB-KW"/>
</dbReference>
<dbReference type="GO" id="GO:0003677">
    <property type="term" value="F:DNA binding"/>
    <property type="evidence" value="ECO:0007669"/>
    <property type="project" value="UniProtKB-KW"/>
</dbReference>
<dbReference type="InterPro" id="IPR004969">
    <property type="entry name" value="Poxvirus_I1"/>
</dbReference>
<dbReference type="Pfam" id="PF03289">
    <property type="entry name" value="Pox_I1"/>
    <property type="match status" value="1"/>
</dbReference>
<dbReference type="PIRSF" id="PIRSF015625">
    <property type="entry name" value="VAC_I1L"/>
    <property type="match status" value="1"/>
</dbReference>
<comment type="function">
    <text evidence="1">DNA-binding protein which binds to the hairpin form of the viral telomeric sequence. Required for the production of mature virions (MV).</text>
</comment>
<comment type="subcellular location">
    <subcellularLocation>
        <location evidence="1">Virion</location>
    </subcellularLocation>
    <text evidence="1">Present in the virus core.</text>
</comment>
<comment type="induction">
    <text>Expressed late in the viral replicative cycle.</text>
</comment>
<comment type="miscellaneous">
    <text evidence="1">Each virion contains approximately 670 molecules of OPG077.</text>
</comment>
<comment type="similarity">
    <text evidence="2">Belongs to the orthopoxvirus OPG077 family.</text>
</comment>
<evidence type="ECO:0000250" key="1">
    <source>
        <dbReference type="UniProtKB" id="P16714"/>
    </source>
</evidence>
<evidence type="ECO:0000305" key="2"/>
<keyword id="KW-0238">DNA-binding</keyword>
<keyword id="KW-0946">Virion</keyword>
<name>PG077_RABPU</name>
<protein>
    <recommendedName>
        <fullName>Telomere-binding protein OPG077</fullName>
    </recommendedName>
    <alternativeName>
        <fullName>Telomere-binding protein I1</fullName>
    </alternativeName>
</protein>